<name>LEPA_ECO45</name>
<accession>B7MIQ4</accession>
<evidence type="ECO:0000255" key="1">
    <source>
        <dbReference type="HAMAP-Rule" id="MF_00071"/>
    </source>
</evidence>
<gene>
    <name evidence="1" type="primary">lepA</name>
    <name type="ordered locus">ECS88_2743</name>
</gene>
<dbReference type="EC" id="3.6.5.n1" evidence="1"/>
<dbReference type="EMBL" id="CU928161">
    <property type="protein sequence ID" value="CAR04006.1"/>
    <property type="molecule type" value="Genomic_DNA"/>
</dbReference>
<dbReference type="RefSeq" id="WP_000790169.1">
    <property type="nucleotide sequence ID" value="NC_011742.1"/>
</dbReference>
<dbReference type="SMR" id="B7MIQ4"/>
<dbReference type="KEGG" id="ecz:ECS88_2743"/>
<dbReference type="HOGENOM" id="CLU_009995_3_3_6"/>
<dbReference type="Proteomes" id="UP000000747">
    <property type="component" value="Chromosome"/>
</dbReference>
<dbReference type="GO" id="GO:0005886">
    <property type="term" value="C:plasma membrane"/>
    <property type="evidence" value="ECO:0007669"/>
    <property type="project" value="UniProtKB-SubCell"/>
</dbReference>
<dbReference type="GO" id="GO:0005525">
    <property type="term" value="F:GTP binding"/>
    <property type="evidence" value="ECO:0007669"/>
    <property type="project" value="UniProtKB-UniRule"/>
</dbReference>
<dbReference type="GO" id="GO:0003924">
    <property type="term" value="F:GTPase activity"/>
    <property type="evidence" value="ECO:0007669"/>
    <property type="project" value="UniProtKB-UniRule"/>
</dbReference>
<dbReference type="GO" id="GO:0097216">
    <property type="term" value="F:guanosine tetraphosphate binding"/>
    <property type="evidence" value="ECO:0007669"/>
    <property type="project" value="UniProtKB-ARBA"/>
</dbReference>
<dbReference type="GO" id="GO:0043022">
    <property type="term" value="F:ribosome binding"/>
    <property type="evidence" value="ECO:0007669"/>
    <property type="project" value="UniProtKB-UniRule"/>
</dbReference>
<dbReference type="GO" id="GO:0003746">
    <property type="term" value="F:translation elongation factor activity"/>
    <property type="evidence" value="ECO:0007669"/>
    <property type="project" value="UniProtKB-UniRule"/>
</dbReference>
<dbReference type="GO" id="GO:0045727">
    <property type="term" value="P:positive regulation of translation"/>
    <property type="evidence" value="ECO:0007669"/>
    <property type="project" value="UniProtKB-UniRule"/>
</dbReference>
<dbReference type="CDD" id="cd03699">
    <property type="entry name" value="EF4_II"/>
    <property type="match status" value="1"/>
</dbReference>
<dbReference type="CDD" id="cd16260">
    <property type="entry name" value="EF4_III"/>
    <property type="match status" value="1"/>
</dbReference>
<dbReference type="CDD" id="cd01890">
    <property type="entry name" value="LepA"/>
    <property type="match status" value="1"/>
</dbReference>
<dbReference type="CDD" id="cd03709">
    <property type="entry name" value="lepA_C"/>
    <property type="match status" value="1"/>
</dbReference>
<dbReference type="FunFam" id="3.30.70.240:FF:000005">
    <property type="entry name" value="Elongation factor 4"/>
    <property type="match status" value="1"/>
</dbReference>
<dbReference type="FunFam" id="3.40.50.300:FF:000078">
    <property type="entry name" value="Elongation factor 4"/>
    <property type="match status" value="1"/>
</dbReference>
<dbReference type="FunFam" id="2.40.30.10:FF:000015">
    <property type="entry name" value="Translation factor GUF1, mitochondrial"/>
    <property type="match status" value="1"/>
</dbReference>
<dbReference type="FunFam" id="3.30.70.2570:FF:000001">
    <property type="entry name" value="Translation factor GUF1, mitochondrial"/>
    <property type="match status" value="1"/>
</dbReference>
<dbReference type="FunFam" id="3.30.70.870:FF:000004">
    <property type="entry name" value="Translation factor GUF1, mitochondrial"/>
    <property type="match status" value="1"/>
</dbReference>
<dbReference type="Gene3D" id="3.30.70.240">
    <property type="match status" value="1"/>
</dbReference>
<dbReference type="Gene3D" id="3.30.70.2570">
    <property type="entry name" value="Elongation factor 4, C-terminal domain"/>
    <property type="match status" value="1"/>
</dbReference>
<dbReference type="Gene3D" id="3.30.70.870">
    <property type="entry name" value="Elongation Factor G (Translational Gtpase), domain 3"/>
    <property type="match status" value="1"/>
</dbReference>
<dbReference type="Gene3D" id="3.40.50.300">
    <property type="entry name" value="P-loop containing nucleotide triphosphate hydrolases"/>
    <property type="match status" value="1"/>
</dbReference>
<dbReference type="Gene3D" id="2.40.30.10">
    <property type="entry name" value="Translation factors"/>
    <property type="match status" value="1"/>
</dbReference>
<dbReference type="HAMAP" id="MF_00071">
    <property type="entry name" value="LepA"/>
    <property type="match status" value="1"/>
</dbReference>
<dbReference type="InterPro" id="IPR006297">
    <property type="entry name" value="EF-4"/>
</dbReference>
<dbReference type="InterPro" id="IPR035647">
    <property type="entry name" value="EFG_III/V"/>
</dbReference>
<dbReference type="InterPro" id="IPR000640">
    <property type="entry name" value="EFG_V-like"/>
</dbReference>
<dbReference type="InterPro" id="IPR004161">
    <property type="entry name" value="EFTu-like_2"/>
</dbReference>
<dbReference type="InterPro" id="IPR031157">
    <property type="entry name" value="G_TR_CS"/>
</dbReference>
<dbReference type="InterPro" id="IPR038363">
    <property type="entry name" value="LepA_C_sf"/>
</dbReference>
<dbReference type="InterPro" id="IPR013842">
    <property type="entry name" value="LepA_CTD"/>
</dbReference>
<dbReference type="InterPro" id="IPR035654">
    <property type="entry name" value="LepA_IV"/>
</dbReference>
<dbReference type="InterPro" id="IPR027417">
    <property type="entry name" value="P-loop_NTPase"/>
</dbReference>
<dbReference type="InterPro" id="IPR005225">
    <property type="entry name" value="Small_GTP-bd"/>
</dbReference>
<dbReference type="InterPro" id="IPR000795">
    <property type="entry name" value="T_Tr_GTP-bd_dom"/>
</dbReference>
<dbReference type="NCBIfam" id="TIGR01393">
    <property type="entry name" value="lepA"/>
    <property type="match status" value="1"/>
</dbReference>
<dbReference type="NCBIfam" id="TIGR00231">
    <property type="entry name" value="small_GTP"/>
    <property type="match status" value="1"/>
</dbReference>
<dbReference type="PANTHER" id="PTHR43512:SF4">
    <property type="entry name" value="TRANSLATION FACTOR GUF1 HOMOLOG, CHLOROPLASTIC"/>
    <property type="match status" value="1"/>
</dbReference>
<dbReference type="PANTHER" id="PTHR43512">
    <property type="entry name" value="TRANSLATION FACTOR GUF1-RELATED"/>
    <property type="match status" value="1"/>
</dbReference>
<dbReference type="Pfam" id="PF00679">
    <property type="entry name" value="EFG_C"/>
    <property type="match status" value="1"/>
</dbReference>
<dbReference type="Pfam" id="PF00009">
    <property type="entry name" value="GTP_EFTU"/>
    <property type="match status" value="1"/>
</dbReference>
<dbReference type="Pfam" id="PF03144">
    <property type="entry name" value="GTP_EFTU_D2"/>
    <property type="match status" value="1"/>
</dbReference>
<dbReference type="Pfam" id="PF06421">
    <property type="entry name" value="LepA_C"/>
    <property type="match status" value="1"/>
</dbReference>
<dbReference type="PRINTS" id="PR00315">
    <property type="entry name" value="ELONGATNFCT"/>
</dbReference>
<dbReference type="SUPFAM" id="SSF54980">
    <property type="entry name" value="EF-G C-terminal domain-like"/>
    <property type="match status" value="2"/>
</dbReference>
<dbReference type="SUPFAM" id="SSF52540">
    <property type="entry name" value="P-loop containing nucleoside triphosphate hydrolases"/>
    <property type="match status" value="1"/>
</dbReference>
<dbReference type="PROSITE" id="PS00301">
    <property type="entry name" value="G_TR_1"/>
    <property type="match status" value="1"/>
</dbReference>
<dbReference type="PROSITE" id="PS51722">
    <property type="entry name" value="G_TR_2"/>
    <property type="match status" value="1"/>
</dbReference>
<reference key="1">
    <citation type="journal article" date="2009" name="PLoS Genet.">
        <title>Organised genome dynamics in the Escherichia coli species results in highly diverse adaptive paths.</title>
        <authorList>
            <person name="Touchon M."/>
            <person name="Hoede C."/>
            <person name="Tenaillon O."/>
            <person name="Barbe V."/>
            <person name="Baeriswyl S."/>
            <person name="Bidet P."/>
            <person name="Bingen E."/>
            <person name="Bonacorsi S."/>
            <person name="Bouchier C."/>
            <person name="Bouvet O."/>
            <person name="Calteau A."/>
            <person name="Chiapello H."/>
            <person name="Clermont O."/>
            <person name="Cruveiller S."/>
            <person name="Danchin A."/>
            <person name="Diard M."/>
            <person name="Dossat C."/>
            <person name="Karoui M.E."/>
            <person name="Frapy E."/>
            <person name="Garry L."/>
            <person name="Ghigo J.M."/>
            <person name="Gilles A.M."/>
            <person name="Johnson J."/>
            <person name="Le Bouguenec C."/>
            <person name="Lescat M."/>
            <person name="Mangenot S."/>
            <person name="Martinez-Jehanne V."/>
            <person name="Matic I."/>
            <person name="Nassif X."/>
            <person name="Oztas S."/>
            <person name="Petit M.A."/>
            <person name="Pichon C."/>
            <person name="Rouy Z."/>
            <person name="Ruf C.S."/>
            <person name="Schneider D."/>
            <person name="Tourret J."/>
            <person name="Vacherie B."/>
            <person name="Vallenet D."/>
            <person name="Medigue C."/>
            <person name="Rocha E.P.C."/>
            <person name="Denamur E."/>
        </authorList>
    </citation>
    <scope>NUCLEOTIDE SEQUENCE [LARGE SCALE GENOMIC DNA]</scope>
    <source>
        <strain>S88 / ExPEC</strain>
    </source>
</reference>
<comment type="function">
    <text evidence="1">Required for accurate and efficient protein synthesis under certain stress conditions. May act as a fidelity factor of the translation reaction, by catalyzing a one-codon backward translocation of tRNAs on improperly translocated ribosomes. Back-translocation proceeds from a post-translocation (POST) complex to a pre-translocation (PRE) complex, thus giving elongation factor G a second chance to translocate the tRNAs correctly. Binds to ribosomes in a GTP-dependent manner.</text>
</comment>
<comment type="catalytic activity">
    <reaction evidence="1">
        <text>GTP + H2O = GDP + phosphate + H(+)</text>
        <dbReference type="Rhea" id="RHEA:19669"/>
        <dbReference type="ChEBI" id="CHEBI:15377"/>
        <dbReference type="ChEBI" id="CHEBI:15378"/>
        <dbReference type="ChEBI" id="CHEBI:37565"/>
        <dbReference type="ChEBI" id="CHEBI:43474"/>
        <dbReference type="ChEBI" id="CHEBI:58189"/>
        <dbReference type="EC" id="3.6.5.n1"/>
    </reaction>
</comment>
<comment type="subcellular location">
    <subcellularLocation>
        <location evidence="1">Cell inner membrane</location>
        <topology evidence="1">Peripheral membrane protein</topology>
        <orientation evidence="1">Cytoplasmic side</orientation>
    </subcellularLocation>
</comment>
<comment type="similarity">
    <text evidence="1">Belongs to the TRAFAC class translation factor GTPase superfamily. Classic translation factor GTPase family. LepA subfamily.</text>
</comment>
<feature type="chain" id="PRO_1000117021" description="Elongation factor 4">
    <location>
        <begin position="1"/>
        <end position="599"/>
    </location>
</feature>
<feature type="domain" description="tr-type G">
    <location>
        <begin position="2"/>
        <end position="184"/>
    </location>
</feature>
<feature type="binding site" evidence="1">
    <location>
        <begin position="14"/>
        <end position="19"/>
    </location>
    <ligand>
        <name>GTP</name>
        <dbReference type="ChEBI" id="CHEBI:37565"/>
    </ligand>
</feature>
<feature type="binding site" evidence="1">
    <location>
        <begin position="131"/>
        <end position="134"/>
    </location>
    <ligand>
        <name>GTP</name>
        <dbReference type="ChEBI" id="CHEBI:37565"/>
    </ligand>
</feature>
<proteinExistence type="inferred from homology"/>
<keyword id="KW-0997">Cell inner membrane</keyword>
<keyword id="KW-1003">Cell membrane</keyword>
<keyword id="KW-0342">GTP-binding</keyword>
<keyword id="KW-0378">Hydrolase</keyword>
<keyword id="KW-0472">Membrane</keyword>
<keyword id="KW-0547">Nucleotide-binding</keyword>
<keyword id="KW-0648">Protein biosynthesis</keyword>
<keyword id="KW-1185">Reference proteome</keyword>
<organism>
    <name type="scientific">Escherichia coli O45:K1 (strain S88 / ExPEC)</name>
    <dbReference type="NCBI Taxonomy" id="585035"/>
    <lineage>
        <taxon>Bacteria</taxon>
        <taxon>Pseudomonadati</taxon>
        <taxon>Pseudomonadota</taxon>
        <taxon>Gammaproteobacteria</taxon>
        <taxon>Enterobacterales</taxon>
        <taxon>Enterobacteriaceae</taxon>
        <taxon>Escherichia</taxon>
    </lineage>
</organism>
<protein>
    <recommendedName>
        <fullName evidence="1">Elongation factor 4</fullName>
        <shortName evidence="1">EF-4</shortName>
        <ecNumber evidence="1">3.6.5.n1</ecNumber>
    </recommendedName>
    <alternativeName>
        <fullName evidence="1">Ribosomal back-translocase LepA</fullName>
    </alternativeName>
</protein>
<sequence length="599" mass="66512">MKNIRNFSIIAHIDHGKSTLSDRIIQICGGLSDREMEAQVLDSMDLERERGITIKAQSVTLDYKASDGETYQLNFIDTPGHVDFSYEVSRSLAACEGALLVVDAGQGVEAQTLANCYTAMEMDLEVVPVLNKIDLPAADPERVAEEIEDIVGIDATDAVRCSAKTGVGVQDVLERLVRDIPPPEGDPEGPLQALIIDSWFDNYLGVVSLIRIKNGTLRKGDKVKVMSTGQTYNADRLGIFTPKQVDRTELKCGEVGWLVCAIKDIHGAPVGDTLTLARNPAEKALPGFKKVKPQVYAGLFPVSSDDYEAFRDALGKLSLNDASLFYEPESSSALGFGFRCGFLGLLHMEIIQERLEREYDLDLITTAPTVVYEVETTSREVIYVDSPSKLPAVNNIYELREPIAECHMLLPQAYLGNVITLCVEKRGVQTNMVYHGNQVALTYEIPMAEVVLDFFDRLKSTSRGYASLDYNFKRFQASDMVRVDVLINGERVDALALITHRGNSQNRGRELVEKMKDLIPRQQFDIAIQAAIGTHIIARSTVKQLRKNVLAKCYGGDISRKKKLLQKQKEGKKRMKQIGNVELPQEAFLAILHVGKDNK</sequence>